<comment type="function">
    <text evidence="1">Specifically catalyzes the decarboxylation of L-arginine to agmatine. Has no S-adenosylmethionine decarboxylase (AdoMetDC) activity.</text>
</comment>
<comment type="catalytic activity">
    <reaction evidence="1">
        <text>L-arginine + H(+) = agmatine + CO2</text>
        <dbReference type="Rhea" id="RHEA:17641"/>
        <dbReference type="ChEBI" id="CHEBI:15378"/>
        <dbReference type="ChEBI" id="CHEBI:16526"/>
        <dbReference type="ChEBI" id="CHEBI:32682"/>
        <dbReference type="ChEBI" id="CHEBI:58145"/>
        <dbReference type="EC" id="4.1.1.19"/>
    </reaction>
</comment>
<comment type="cofactor">
    <cofactor evidence="1">
        <name>pyruvate</name>
        <dbReference type="ChEBI" id="CHEBI:15361"/>
    </cofactor>
    <text evidence="1">Binds 1 pyruvoyl group covalently per subunit.</text>
</comment>
<comment type="pathway">
    <text evidence="1">Amine and polyamine biosynthesis; agmatine biosynthesis; agmatine from L-arginine: step 1/1.</text>
</comment>
<comment type="subunit">
    <text evidence="1">Heterooctamer of four alpha and four beta chains arranged as a tetramer of alpha/beta heterodimers.</text>
</comment>
<comment type="PTM">
    <text evidence="1">Is synthesized initially as an inactive proenzyme. Formation of the active enzyme involves a self-maturation process in which the active site pyruvoyl group is generated from an internal serine residue via an autocatalytic post-translational modification. Two non-identical subunits are generated from the proenzyme in this reaction, and the pyruvate is formed at the N-terminus of the alpha chain, which is derived from the carboxyl end of the proenzyme. The post-translation cleavage follows an unusual pathway, termed non-hydrolytic serinolysis, in which the side chain hydroxyl group of the serine supplies its oxygen atom to form the C-terminus of the beta chain, while the remainder of the serine residue undergoes an oxidative deamination to produce ammonia and the pyruvoyl group blocking the N-terminus of the alpha chain.</text>
</comment>
<comment type="similarity">
    <text evidence="1">Belongs to the prokaryotic AdoMetDC family. Type 1 subfamily.</text>
</comment>
<accession>A1RV83</accession>
<feature type="chain" id="PRO_0000364123" description="Arginine decarboxylase beta chain" evidence="1">
    <location>
        <begin position="1"/>
        <end position="73"/>
    </location>
</feature>
<feature type="chain" id="PRO_0000364124" description="Arginine decarboxylase alpha chain" evidence="1">
    <location>
        <begin position="74"/>
        <end position="126"/>
    </location>
</feature>
<feature type="active site" description="Schiff-base intermediate with substrate; via pyruvic acid" evidence="1">
    <location>
        <position position="74"/>
    </location>
</feature>
<feature type="active site" description="Proton acceptor; for processing activity" evidence="1">
    <location>
        <position position="79"/>
    </location>
</feature>
<feature type="active site" description="Proton donor; for catalytic activity" evidence="1">
    <location>
        <position position="94"/>
    </location>
</feature>
<feature type="site" description="Cleavage (non-hydrolytic); by autolysis" evidence="1">
    <location>
        <begin position="73"/>
        <end position="74"/>
    </location>
</feature>
<feature type="modified residue" description="Pyruvic acid (Ser); by autocatalysis" evidence="1">
    <location>
        <position position="74"/>
    </location>
</feature>
<reference key="1">
    <citation type="submission" date="2006-12" db="EMBL/GenBank/DDBJ databases">
        <title>Complete sequence of Pyrobaculum islandicum DSM 4184.</title>
        <authorList>
            <person name="Copeland A."/>
            <person name="Lucas S."/>
            <person name="Lapidus A."/>
            <person name="Barry K."/>
            <person name="Detter J.C."/>
            <person name="Glavina del Rio T."/>
            <person name="Dalin E."/>
            <person name="Tice H."/>
            <person name="Pitluck S."/>
            <person name="Meincke L."/>
            <person name="Brettin T."/>
            <person name="Bruce D."/>
            <person name="Han C."/>
            <person name="Tapia R."/>
            <person name="Gilna P."/>
            <person name="Schmutz J."/>
            <person name="Larimer F."/>
            <person name="Land M."/>
            <person name="Hauser L."/>
            <person name="Kyrpides N."/>
            <person name="Mikhailova N."/>
            <person name="Cozen A.E."/>
            <person name="Fitz-Gibbon S.T."/>
            <person name="House C.H."/>
            <person name="Saltikov C."/>
            <person name="Lowe T."/>
            <person name="Richardson P."/>
        </authorList>
    </citation>
    <scope>NUCLEOTIDE SEQUENCE [LARGE SCALE GENOMIC DNA]</scope>
    <source>
        <strain>DSM 4184 / JCM 9189 / GEO3</strain>
    </source>
</reference>
<dbReference type="EC" id="4.1.1.19" evidence="1"/>
<dbReference type="EMBL" id="CP000504">
    <property type="protein sequence ID" value="ABL88865.1"/>
    <property type="molecule type" value="Genomic_DNA"/>
</dbReference>
<dbReference type="RefSeq" id="WP_011763440.1">
    <property type="nucleotide sequence ID" value="NC_008701.1"/>
</dbReference>
<dbReference type="SMR" id="A1RV83"/>
<dbReference type="STRING" id="384616.Pisl_1714"/>
<dbReference type="GeneID" id="4617816"/>
<dbReference type="KEGG" id="pis:Pisl_1714"/>
<dbReference type="eggNOG" id="arCOG00279">
    <property type="taxonomic scope" value="Archaea"/>
</dbReference>
<dbReference type="HOGENOM" id="CLU_125470_2_1_2"/>
<dbReference type="OrthoDB" id="114016at2157"/>
<dbReference type="UniPathway" id="UPA00186">
    <property type="reaction ID" value="UER00284"/>
</dbReference>
<dbReference type="Proteomes" id="UP000002595">
    <property type="component" value="Chromosome"/>
</dbReference>
<dbReference type="GO" id="GO:0005829">
    <property type="term" value="C:cytosol"/>
    <property type="evidence" value="ECO:0007669"/>
    <property type="project" value="TreeGrafter"/>
</dbReference>
<dbReference type="GO" id="GO:0008792">
    <property type="term" value="F:arginine decarboxylase activity"/>
    <property type="evidence" value="ECO:0007669"/>
    <property type="project" value="UniProtKB-UniRule"/>
</dbReference>
<dbReference type="GO" id="GO:0006527">
    <property type="term" value="P:arginine catabolic process"/>
    <property type="evidence" value="ECO:0007669"/>
    <property type="project" value="UniProtKB-UniRule"/>
</dbReference>
<dbReference type="GO" id="GO:0006596">
    <property type="term" value="P:polyamine biosynthetic process"/>
    <property type="evidence" value="ECO:0007669"/>
    <property type="project" value="UniProtKB-UniRule"/>
</dbReference>
<dbReference type="FunFam" id="3.60.90.10:FF:000005">
    <property type="entry name" value="Arginine decarboxylase proenzyme"/>
    <property type="match status" value="1"/>
</dbReference>
<dbReference type="Gene3D" id="3.60.90.10">
    <property type="entry name" value="S-adenosylmethionine decarboxylase"/>
    <property type="match status" value="1"/>
</dbReference>
<dbReference type="HAMAP" id="MF_00464">
    <property type="entry name" value="AdoMetDC_1"/>
    <property type="match status" value="1"/>
</dbReference>
<dbReference type="HAMAP" id="MF_01298">
    <property type="entry name" value="ArgDC"/>
    <property type="match status" value="1"/>
</dbReference>
<dbReference type="InterPro" id="IPR003826">
    <property type="entry name" value="AdoMetDC_fam_prok"/>
</dbReference>
<dbReference type="InterPro" id="IPR027549">
    <property type="entry name" value="ArgDC"/>
</dbReference>
<dbReference type="InterPro" id="IPR016067">
    <property type="entry name" value="S-AdoMet_deCO2ase_core"/>
</dbReference>
<dbReference type="InterPro" id="IPR017716">
    <property type="entry name" value="S-AdoMet_deCOase_pro-enz"/>
</dbReference>
<dbReference type="NCBIfam" id="TIGR03330">
    <property type="entry name" value="SAM_DCase_Bsu"/>
    <property type="match status" value="1"/>
</dbReference>
<dbReference type="PANTHER" id="PTHR33866">
    <property type="entry name" value="S-ADENOSYLMETHIONINE DECARBOXYLASE PROENZYME"/>
    <property type="match status" value="1"/>
</dbReference>
<dbReference type="PANTHER" id="PTHR33866:SF2">
    <property type="entry name" value="S-ADENOSYLMETHIONINE DECARBOXYLASE PROENZYME"/>
    <property type="match status" value="1"/>
</dbReference>
<dbReference type="Pfam" id="PF02675">
    <property type="entry name" value="AdoMet_dc"/>
    <property type="match status" value="1"/>
</dbReference>
<dbReference type="SUPFAM" id="SSF56276">
    <property type="entry name" value="S-adenosylmethionine decarboxylase"/>
    <property type="match status" value="1"/>
</dbReference>
<organism>
    <name type="scientific">Pyrobaculum islandicum (strain DSM 4184 / JCM 9189 / GEO3)</name>
    <dbReference type="NCBI Taxonomy" id="384616"/>
    <lineage>
        <taxon>Archaea</taxon>
        <taxon>Thermoproteota</taxon>
        <taxon>Thermoprotei</taxon>
        <taxon>Thermoproteales</taxon>
        <taxon>Thermoproteaceae</taxon>
        <taxon>Pyrobaculum</taxon>
    </lineage>
</organism>
<sequence length="126" mass="14369">MQTTTQVKTPIVGKHVYGELYGVDEALLRDEEKLRRIVIEAAHIAKMHLVEVNSWRFKGGDKEGVSVIALVLESHIAIHTWPVYNYATVDVYTCGEHSDPMAAFRYIVSQLAPKRFTVNYSDRSYK</sequence>
<gene>
    <name type="ordered locus">Pisl_1714</name>
</gene>
<evidence type="ECO:0000255" key="1">
    <source>
        <dbReference type="HAMAP-Rule" id="MF_01298"/>
    </source>
</evidence>
<protein>
    <recommendedName>
        <fullName evidence="1">Arginine decarboxylase proenzyme</fullName>
        <shortName evidence="1">ADC</shortName>
        <shortName evidence="1">ArgDC</shortName>
        <ecNumber evidence="1">4.1.1.19</ecNumber>
    </recommendedName>
    <alternativeName>
        <fullName evidence="1">Pyruvoyl-dependent arginine decarboxylase</fullName>
    </alternativeName>
    <component>
        <recommendedName>
            <fullName evidence="1">Arginine decarboxylase beta chain</fullName>
        </recommendedName>
    </component>
    <component>
        <recommendedName>
            <fullName evidence="1">Arginine decarboxylase alpha chain</fullName>
        </recommendedName>
    </component>
</protein>
<keyword id="KW-0068">Autocatalytic cleavage</keyword>
<keyword id="KW-0210">Decarboxylase</keyword>
<keyword id="KW-0456">Lyase</keyword>
<keyword id="KW-0620">Polyamine biosynthesis</keyword>
<keyword id="KW-0670">Pyruvate</keyword>
<keyword id="KW-0704">Schiff base</keyword>
<keyword id="KW-0865">Zymogen</keyword>
<name>ARGDC_PYRIL</name>
<proteinExistence type="inferred from homology"/>